<sequence>MQKFDTRTFQGLILTLQDYWARQGCTIVQPLDMEVGAGTSHPMTCLRALGPEPIAAAYVQPSRRPTDGRYGENPNRLQHYYQFQVIIKPSPDNIQELYLGSLKELGMDPTIHDIRFVEDNWENPTLGAWGLGWEVWLNGMEVTQFTYFQQVGGLECKPVTGEITYGLERLAMYIQGVDSVYDLVWSDGPLGKTTYGDVFHQNEVEQSTYNFEYADVDFLFTCFEQYEKEAQQLLALENPLPLPAYERILKAAHSFNLLDARKAISVTERQRYILRIRTLTKAVAEAYYASREALGFPMCNRNK</sequence>
<comment type="catalytic activity">
    <reaction evidence="1">
        <text>tRNA(Gly) + glycine + ATP = glycyl-tRNA(Gly) + AMP + diphosphate</text>
        <dbReference type="Rhea" id="RHEA:16013"/>
        <dbReference type="Rhea" id="RHEA-COMP:9664"/>
        <dbReference type="Rhea" id="RHEA-COMP:9683"/>
        <dbReference type="ChEBI" id="CHEBI:30616"/>
        <dbReference type="ChEBI" id="CHEBI:33019"/>
        <dbReference type="ChEBI" id="CHEBI:57305"/>
        <dbReference type="ChEBI" id="CHEBI:78442"/>
        <dbReference type="ChEBI" id="CHEBI:78522"/>
        <dbReference type="ChEBI" id="CHEBI:456215"/>
        <dbReference type="EC" id="6.1.1.14"/>
    </reaction>
</comment>
<comment type="subunit">
    <text evidence="1">Tetramer of two alpha and two beta subunits.</text>
</comment>
<comment type="subcellular location">
    <subcellularLocation>
        <location evidence="1">Cytoplasm</location>
    </subcellularLocation>
</comment>
<comment type="similarity">
    <text evidence="1">Belongs to the class-II aminoacyl-tRNA synthetase family.</text>
</comment>
<proteinExistence type="inferred from homology"/>
<evidence type="ECO:0000255" key="1">
    <source>
        <dbReference type="HAMAP-Rule" id="MF_00254"/>
    </source>
</evidence>
<name>SYGA_CROS8</name>
<keyword id="KW-0030">Aminoacyl-tRNA synthetase</keyword>
<keyword id="KW-0067">ATP-binding</keyword>
<keyword id="KW-0963">Cytoplasm</keyword>
<keyword id="KW-0436">Ligase</keyword>
<keyword id="KW-0547">Nucleotide-binding</keyword>
<keyword id="KW-0648">Protein biosynthesis</keyword>
<keyword id="KW-1185">Reference proteome</keyword>
<dbReference type="EC" id="6.1.1.14" evidence="1"/>
<dbReference type="EMBL" id="CP000783">
    <property type="protein sequence ID" value="ABU79349.1"/>
    <property type="molecule type" value="Genomic_DNA"/>
</dbReference>
<dbReference type="RefSeq" id="WP_004387598.1">
    <property type="nucleotide sequence ID" value="NC_009778.1"/>
</dbReference>
<dbReference type="SMR" id="A7MKR9"/>
<dbReference type="GeneID" id="92804375"/>
<dbReference type="KEGG" id="esa:ESA_04168"/>
<dbReference type="HOGENOM" id="CLU_057066_1_0_6"/>
<dbReference type="Proteomes" id="UP000000260">
    <property type="component" value="Chromosome"/>
</dbReference>
<dbReference type="GO" id="GO:0005829">
    <property type="term" value="C:cytosol"/>
    <property type="evidence" value="ECO:0007669"/>
    <property type="project" value="TreeGrafter"/>
</dbReference>
<dbReference type="GO" id="GO:0005524">
    <property type="term" value="F:ATP binding"/>
    <property type="evidence" value="ECO:0007669"/>
    <property type="project" value="UniProtKB-UniRule"/>
</dbReference>
<dbReference type="GO" id="GO:0004820">
    <property type="term" value="F:glycine-tRNA ligase activity"/>
    <property type="evidence" value="ECO:0007669"/>
    <property type="project" value="UniProtKB-UniRule"/>
</dbReference>
<dbReference type="GO" id="GO:0006426">
    <property type="term" value="P:glycyl-tRNA aminoacylation"/>
    <property type="evidence" value="ECO:0007669"/>
    <property type="project" value="UniProtKB-UniRule"/>
</dbReference>
<dbReference type="CDD" id="cd00733">
    <property type="entry name" value="GlyRS_alpha_core"/>
    <property type="match status" value="1"/>
</dbReference>
<dbReference type="FunFam" id="1.20.58.180:FF:000001">
    <property type="entry name" value="Glycine--tRNA ligase alpha subunit"/>
    <property type="match status" value="1"/>
</dbReference>
<dbReference type="FunFam" id="3.30.930.10:FF:000006">
    <property type="entry name" value="Glycine--tRNA ligase alpha subunit"/>
    <property type="match status" value="1"/>
</dbReference>
<dbReference type="Gene3D" id="3.30.930.10">
    <property type="entry name" value="Bira Bifunctional Protein, Domain 2"/>
    <property type="match status" value="1"/>
</dbReference>
<dbReference type="Gene3D" id="1.20.58.180">
    <property type="entry name" value="Class II aaRS and biotin synthetases, domain 2"/>
    <property type="match status" value="1"/>
</dbReference>
<dbReference type="HAMAP" id="MF_00254">
    <property type="entry name" value="Gly_tRNA_synth_alpha"/>
    <property type="match status" value="1"/>
</dbReference>
<dbReference type="InterPro" id="IPR045864">
    <property type="entry name" value="aa-tRNA-synth_II/BPL/LPL"/>
</dbReference>
<dbReference type="InterPro" id="IPR006194">
    <property type="entry name" value="Gly-tRNA-synth_heterodimer"/>
</dbReference>
<dbReference type="InterPro" id="IPR002310">
    <property type="entry name" value="Gly-tRNA_ligase_asu"/>
</dbReference>
<dbReference type="NCBIfam" id="TIGR00388">
    <property type="entry name" value="glyQ"/>
    <property type="match status" value="1"/>
</dbReference>
<dbReference type="NCBIfam" id="NF006827">
    <property type="entry name" value="PRK09348.1"/>
    <property type="match status" value="1"/>
</dbReference>
<dbReference type="PANTHER" id="PTHR30075:SF2">
    <property type="entry name" value="GLYCINE--TRNA LIGASE, CHLOROPLASTIC_MITOCHONDRIAL 2"/>
    <property type="match status" value="1"/>
</dbReference>
<dbReference type="PANTHER" id="PTHR30075">
    <property type="entry name" value="GLYCYL-TRNA SYNTHETASE"/>
    <property type="match status" value="1"/>
</dbReference>
<dbReference type="Pfam" id="PF02091">
    <property type="entry name" value="tRNA-synt_2e"/>
    <property type="match status" value="1"/>
</dbReference>
<dbReference type="PRINTS" id="PR01044">
    <property type="entry name" value="TRNASYNTHGA"/>
</dbReference>
<dbReference type="SUPFAM" id="SSF55681">
    <property type="entry name" value="Class II aaRS and biotin synthetases"/>
    <property type="match status" value="1"/>
</dbReference>
<dbReference type="PROSITE" id="PS50861">
    <property type="entry name" value="AA_TRNA_LIGASE_II_GLYAB"/>
    <property type="match status" value="1"/>
</dbReference>
<accession>A7MKR9</accession>
<protein>
    <recommendedName>
        <fullName evidence="1">Glycine--tRNA ligase alpha subunit</fullName>
        <ecNumber evidence="1">6.1.1.14</ecNumber>
    </recommendedName>
    <alternativeName>
        <fullName evidence="1">Glycyl-tRNA synthetase alpha subunit</fullName>
        <shortName evidence="1">GlyRS</shortName>
    </alternativeName>
</protein>
<reference key="1">
    <citation type="journal article" date="2010" name="PLoS ONE">
        <title>Genome sequence of Cronobacter sakazakii BAA-894 and comparative genomic hybridization analysis with other Cronobacter species.</title>
        <authorList>
            <person name="Kucerova E."/>
            <person name="Clifton S.W."/>
            <person name="Xia X.Q."/>
            <person name="Long F."/>
            <person name="Porwollik S."/>
            <person name="Fulton L."/>
            <person name="Fronick C."/>
            <person name="Minx P."/>
            <person name="Kyung K."/>
            <person name="Warren W."/>
            <person name="Fulton R."/>
            <person name="Feng D."/>
            <person name="Wollam A."/>
            <person name="Shah N."/>
            <person name="Bhonagiri V."/>
            <person name="Nash W.E."/>
            <person name="Hallsworth-Pepin K."/>
            <person name="Wilson R.K."/>
            <person name="McClelland M."/>
            <person name="Forsythe S.J."/>
        </authorList>
    </citation>
    <scope>NUCLEOTIDE SEQUENCE [LARGE SCALE GENOMIC DNA]</scope>
    <source>
        <strain>ATCC BAA-894</strain>
    </source>
</reference>
<feature type="chain" id="PRO_1000047422" description="Glycine--tRNA ligase alpha subunit">
    <location>
        <begin position="1"/>
        <end position="303"/>
    </location>
</feature>
<organism>
    <name type="scientific">Cronobacter sakazakii (strain ATCC BAA-894)</name>
    <name type="common">Enterobacter sakazakii</name>
    <dbReference type="NCBI Taxonomy" id="290339"/>
    <lineage>
        <taxon>Bacteria</taxon>
        <taxon>Pseudomonadati</taxon>
        <taxon>Pseudomonadota</taxon>
        <taxon>Gammaproteobacteria</taxon>
        <taxon>Enterobacterales</taxon>
        <taxon>Enterobacteriaceae</taxon>
        <taxon>Cronobacter</taxon>
    </lineage>
</organism>
<gene>
    <name evidence="1" type="primary">glyQ</name>
    <name type="ordered locus">ESA_04168</name>
</gene>